<accession>A4QUL1</accession>
<accession>G4N0Z2</accession>
<comment type="function">
    <text evidence="1">Component of the coat protein complex II (COPII) which promotes the formation of transport vesicles from the endoplasmic reticulum (ER). The coat has two main functions, the physical deformation of the endoplasmic reticulum membrane into vesicles and the selection of cargo molecules (By similarity).</text>
</comment>
<comment type="subunit">
    <text evidence="1">The COPII coat is composed of at least 5 proteins: the SEC23/24 complex, the SEC13/31 complex, and the protein SAR1. Golgi apparatus membrane; Peripheral membrane protein; Cytoplasmic side.</text>
</comment>
<comment type="subcellular location">
    <subcellularLocation>
        <location evidence="1">Cytoplasm</location>
    </subcellularLocation>
    <subcellularLocation>
        <location evidence="1">Cytoplasmic vesicle</location>
        <location evidence="1">COPII-coated vesicle membrane</location>
        <topology evidence="1">Peripheral membrane protein</topology>
        <orientation evidence="1">Cytoplasmic side</orientation>
    </subcellularLocation>
    <subcellularLocation>
        <location evidence="1">Endoplasmic reticulum membrane</location>
        <topology evidence="1">Peripheral membrane protein</topology>
        <orientation evidence="1">Cytoplasmic side</orientation>
    </subcellularLocation>
    <subcellularLocation>
        <location evidence="1">Golgi apparatus membrane</location>
        <topology evidence="1">Peripheral membrane protein</topology>
        <orientation evidence="1">Cytoplasmic side</orientation>
    </subcellularLocation>
</comment>
<comment type="similarity">
    <text evidence="3">Belongs to the SEC23/SEC24 family. SEC24 subfamily.</text>
</comment>
<gene>
    <name type="primary">SEC24</name>
    <name type="ORF">MGG_09564</name>
</gene>
<proteinExistence type="inferred from homology"/>
<sequence>MSAPDQGYGQYPPAGQQYDQQQQPYPDQQGFEAQPGAPPQAGAPPTADGRKKKRNYAAGAFDVGTGANVAPGAGPPMPGQTPQYGMPPAGQPAYGGFAQQPDPQAPVYGDPSQQQPQQYGAPMASPGQPGVGGYQAPDPYYTSGVGAPGAPAGPGGVAGLTSNLAGMQLGPGQPAQAPAQQQARPTPLNQLYPTDLLNQPFNVSELDLPPPPVILPLNSSVTSSPMANCPPKYVRSTLNAVPTTHSLLKKSKLPFALVIQPYAALHDHEDNVPLVQDQVISRCRRCRSYINPYVVFLDQGHRWRCNMCNLTNDVPQAFDWDAAEQRAVDRWQRHELNHAVVEFVAPQEYMVRPPQPLVYLFLFDVSYAAVSSGLLATSARTILDSLNRIPNADRRTRLGFIAVDSSLHYFAVPKDGDENAETSMLVVSDLDEPFLPVPQELLVPLTDSRQRIENFLTKLPEMFQNTTNNGSCMGSALRAGHKLISPLGGKIVVLSASLPNVGYGKLDMREDKKVLGTSKENSLLQTANSFYKSFAVDSSKNQVSIDMFLFSSQYQDVASLSNLPRYTGGQTWFYPGWNAGRPEDAIKFASEFSDYLSSEIGLEAVLRVRATTGLRMSSFYGNFFNRSSDLCAFPAFPRDQCYVVEVAIDETLGKNVVCMQTAVLHTTCNGERRIRVITLALPTTTNLADVYASADQCAITTYFSHKAVEKALSSGLEAARDSLQSKLTELLQTFRKELAGGSMGGGLQFPANLRGLPALFLGLIKNVGLRKSAQIPSDLRSAALCLLSTLPLPLLVQYIYPRLYSLHDMPDNAGIPDPETSQIVLPPPLNLSSERFQPFGLYLIDDGQTQFLWVGRDAVPQLLIDVFGVQDRTQLRVGKGSVPELDNDFNERVRAVISKSRDYKSRGVGSITVPHLYIVREDGEPALKLWAQTLLVEDRADQGMSYQQWMGTLREKVVQ</sequence>
<evidence type="ECO:0000250" key="1"/>
<evidence type="ECO:0000256" key="2">
    <source>
        <dbReference type="SAM" id="MobiDB-lite"/>
    </source>
</evidence>
<evidence type="ECO:0000305" key="3"/>
<organism>
    <name type="scientific">Pyricularia oryzae (strain 70-15 / ATCC MYA-4617 / FGSC 8958)</name>
    <name type="common">Rice blast fungus</name>
    <name type="synonym">Magnaporthe oryzae</name>
    <dbReference type="NCBI Taxonomy" id="242507"/>
    <lineage>
        <taxon>Eukaryota</taxon>
        <taxon>Fungi</taxon>
        <taxon>Dikarya</taxon>
        <taxon>Ascomycota</taxon>
        <taxon>Pezizomycotina</taxon>
        <taxon>Sordariomycetes</taxon>
        <taxon>Sordariomycetidae</taxon>
        <taxon>Magnaporthales</taxon>
        <taxon>Pyriculariaceae</taxon>
        <taxon>Pyricularia</taxon>
    </lineage>
</organism>
<reference key="1">
    <citation type="journal article" date="2005" name="Nature">
        <title>The genome sequence of the rice blast fungus Magnaporthe grisea.</title>
        <authorList>
            <person name="Dean R.A."/>
            <person name="Talbot N.J."/>
            <person name="Ebbole D.J."/>
            <person name="Farman M.L."/>
            <person name="Mitchell T.K."/>
            <person name="Orbach M.J."/>
            <person name="Thon M.R."/>
            <person name="Kulkarni R."/>
            <person name="Xu J.-R."/>
            <person name="Pan H."/>
            <person name="Read N.D."/>
            <person name="Lee Y.-H."/>
            <person name="Carbone I."/>
            <person name="Brown D."/>
            <person name="Oh Y.Y."/>
            <person name="Donofrio N."/>
            <person name="Jeong J.S."/>
            <person name="Soanes D.M."/>
            <person name="Djonovic S."/>
            <person name="Kolomiets E."/>
            <person name="Rehmeyer C."/>
            <person name="Li W."/>
            <person name="Harding M."/>
            <person name="Kim S."/>
            <person name="Lebrun M.-H."/>
            <person name="Bohnert H."/>
            <person name="Coughlan S."/>
            <person name="Butler J."/>
            <person name="Calvo S.E."/>
            <person name="Ma L.-J."/>
            <person name="Nicol R."/>
            <person name="Purcell S."/>
            <person name="Nusbaum C."/>
            <person name="Galagan J.E."/>
            <person name="Birren B.W."/>
        </authorList>
    </citation>
    <scope>NUCLEOTIDE SEQUENCE [LARGE SCALE GENOMIC DNA]</scope>
    <source>
        <strain>70-15 / ATCC MYA-4617 / FGSC 8958</strain>
    </source>
</reference>
<name>SEC24_PYRO7</name>
<keyword id="KW-0963">Cytoplasm</keyword>
<keyword id="KW-0968">Cytoplasmic vesicle</keyword>
<keyword id="KW-0256">Endoplasmic reticulum</keyword>
<keyword id="KW-0931">ER-Golgi transport</keyword>
<keyword id="KW-0333">Golgi apparatus</keyword>
<keyword id="KW-0472">Membrane</keyword>
<keyword id="KW-0479">Metal-binding</keyword>
<keyword id="KW-0653">Protein transport</keyword>
<keyword id="KW-1185">Reference proteome</keyword>
<keyword id="KW-0813">Transport</keyword>
<keyword id="KW-0862">Zinc</keyword>
<dbReference type="EMBL" id="CM001233">
    <property type="protein sequence ID" value="EHA52370.1"/>
    <property type="molecule type" value="Genomic_DNA"/>
</dbReference>
<dbReference type="RefSeq" id="XP_003712177.1">
    <property type="nucleotide sequence ID" value="XM_003712129.1"/>
</dbReference>
<dbReference type="SMR" id="A4QUL1"/>
<dbReference type="FunCoup" id="A4QUL1">
    <property type="interactions" value="843"/>
</dbReference>
<dbReference type="STRING" id="242507.A4QUL1"/>
<dbReference type="EnsemblFungi" id="MGG_09564T0">
    <property type="protein sequence ID" value="MGG_09564T0"/>
    <property type="gene ID" value="MGG_09564"/>
</dbReference>
<dbReference type="GeneID" id="2680462"/>
<dbReference type="KEGG" id="mgr:MGG_09564"/>
<dbReference type="VEuPathDB" id="FungiDB:MGG_09564"/>
<dbReference type="eggNOG" id="KOG1985">
    <property type="taxonomic scope" value="Eukaryota"/>
</dbReference>
<dbReference type="HOGENOM" id="CLU_004589_2_1_1"/>
<dbReference type="InParanoid" id="A4QUL1"/>
<dbReference type="OMA" id="AVECSKQ"/>
<dbReference type="OrthoDB" id="49016at2759"/>
<dbReference type="Proteomes" id="UP000009058">
    <property type="component" value="Chromosome 3"/>
</dbReference>
<dbReference type="GO" id="GO:0005801">
    <property type="term" value="C:cis-Golgi network"/>
    <property type="evidence" value="ECO:0007669"/>
    <property type="project" value="EnsemblFungi"/>
</dbReference>
<dbReference type="GO" id="GO:0030127">
    <property type="term" value="C:COPII vesicle coat"/>
    <property type="evidence" value="ECO:0007669"/>
    <property type="project" value="InterPro"/>
</dbReference>
<dbReference type="GO" id="GO:0070971">
    <property type="term" value="C:endoplasmic reticulum exit site"/>
    <property type="evidence" value="ECO:0007669"/>
    <property type="project" value="EnsemblFungi"/>
</dbReference>
<dbReference type="GO" id="GO:0005789">
    <property type="term" value="C:endoplasmic reticulum membrane"/>
    <property type="evidence" value="ECO:0007669"/>
    <property type="project" value="UniProtKB-SubCell"/>
</dbReference>
<dbReference type="GO" id="GO:1990753">
    <property type="term" value="C:equatorial cell cortex"/>
    <property type="evidence" value="ECO:0007669"/>
    <property type="project" value="EnsemblFungi"/>
</dbReference>
<dbReference type="GO" id="GO:0000139">
    <property type="term" value="C:Golgi membrane"/>
    <property type="evidence" value="ECO:0007669"/>
    <property type="project" value="UniProtKB-SubCell"/>
</dbReference>
<dbReference type="GO" id="GO:0000149">
    <property type="term" value="F:SNARE binding"/>
    <property type="evidence" value="ECO:0007669"/>
    <property type="project" value="TreeGrafter"/>
</dbReference>
<dbReference type="GO" id="GO:0008270">
    <property type="term" value="F:zinc ion binding"/>
    <property type="evidence" value="ECO:0007669"/>
    <property type="project" value="InterPro"/>
</dbReference>
<dbReference type="GO" id="GO:0090110">
    <property type="term" value="P:COPII-coated vesicle cargo loading"/>
    <property type="evidence" value="ECO:0007669"/>
    <property type="project" value="TreeGrafter"/>
</dbReference>
<dbReference type="GO" id="GO:0006886">
    <property type="term" value="P:intracellular protein transport"/>
    <property type="evidence" value="ECO:0007669"/>
    <property type="project" value="InterPro"/>
</dbReference>
<dbReference type="CDD" id="cd01479">
    <property type="entry name" value="Sec24-like"/>
    <property type="match status" value="1"/>
</dbReference>
<dbReference type="Gene3D" id="2.60.40.1670">
    <property type="entry name" value="beta-sandwich domain of Sec23/24"/>
    <property type="match status" value="1"/>
</dbReference>
<dbReference type="Gene3D" id="1.20.120.730">
    <property type="entry name" value="Sec23/Sec24 helical domain"/>
    <property type="match status" value="1"/>
</dbReference>
<dbReference type="Gene3D" id="3.40.20.10">
    <property type="entry name" value="Severin"/>
    <property type="match status" value="1"/>
</dbReference>
<dbReference type="Gene3D" id="3.40.50.410">
    <property type="entry name" value="von Willebrand factor, type A domain"/>
    <property type="match status" value="1"/>
</dbReference>
<dbReference type="Gene3D" id="2.30.30.380">
    <property type="entry name" value="Zn-finger domain of Sec23/24"/>
    <property type="match status" value="1"/>
</dbReference>
<dbReference type="InterPro" id="IPR029006">
    <property type="entry name" value="ADF-H/Gelsolin-like_dom_sf"/>
</dbReference>
<dbReference type="InterPro" id="IPR007123">
    <property type="entry name" value="Gelsolin-like_dom"/>
</dbReference>
<dbReference type="InterPro" id="IPR036180">
    <property type="entry name" value="Gelsolin-like_dom_sf"/>
</dbReference>
<dbReference type="InterPro" id="IPR006900">
    <property type="entry name" value="Sec23/24_helical_dom"/>
</dbReference>
<dbReference type="InterPro" id="IPR036175">
    <property type="entry name" value="Sec23/24_helical_dom_sf"/>
</dbReference>
<dbReference type="InterPro" id="IPR006896">
    <property type="entry name" value="Sec23/24_trunk_dom"/>
</dbReference>
<dbReference type="InterPro" id="IPR012990">
    <property type="entry name" value="Sec23_24_beta_S"/>
</dbReference>
<dbReference type="InterPro" id="IPR050550">
    <property type="entry name" value="SEC23_SEC24_subfamily"/>
</dbReference>
<dbReference type="InterPro" id="IPR041742">
    <property type="entry name" value="Sec24-like_trunk_dom"/>
</dbReference>
<dbReference type="InterPro" id="IPR036465">
    <property type="entry name" value="vWFA_dom_sf"/>
</dbReference>
<dbReference type="InterPro" id="IPR006895">
    <property type="entry name" value="Znf_Sec23_Sec24"/>
</dbReference>
<dbReference type="InterPro" id="IPR036174">
    <property type="entry name" value="Znf_Sec23_Sec24_sf"/>
</dbReference>
<dbReference type="PANTHER" id="PTHR13803">
    <property type="entry name" value="SEC24-RELATED PROTEIN"/>
    <property type="match status" value="1"/>
</dbReference>
<dbReference type="PANTHER" id="PTHR13803:SF39">
    <property type="entry name" value="SECRETORY 24AB, ISOFORM A"/>
    <property type="match status" value="1"/>
</dbReference>
<dbReference type="Pfam" id="PF00626">
    <property type="entry name" value="Gelsolin"/>
    <property type="match status" value="1"/>
</dbReference>
<dbReference type="Pfam" id="PF08033">
    <property type="entry name" value="Sec23_BS"/>
    <property type="match status" value="1"/>
</dbReference>
<dbReference type="Pfam" id="PF04815">
    <property type="entry name" value="Sec23_helical"/>
    <property type="match status" value="1"/>
</dbReference>
<dbReference type="Pfam" id="PF04811">
    <property type="entry name" value="Sec23_trunk"/>
    <property type="match status" value="1"/>
</dbReference>
<dbReference type="Pfam" id="PF04810">
    <property type="entry name" value="zf-Sec23_Sec24"/>
    <property type="match status" value="1"/>
</dbReference>
<dbReference type="SUPFAM" id="SSF81995">
    <property type="entry name" value="beta-sandwich domain of Sec23/24"/>
    <property type="match status" value="1"/>
</dbReference>
<dbReference type="SUPFAM" id="SSF82754">
    <property type="entry name" value="C-terminal, gelsolin-like domain of Sec23/24"/>
    <property type="match status" value="1"/>
</dbReference>
<dbReference type="SUPFAM" id="SSF81811">
    <property type="entry name" value="Helical domain of Sec23/24"/>
    <property type="match status" value="1"/>
</dbReference>
<dbReference type="SUPFAM" id="SSF53300">
    <property type="entry name" value="vWA-like"/>
    <property type="match status" value="1"/>
</dbReference>
<dbReference type="SUPFAM" id="SSF82919">
    <property type="entry name" value="Zn-finger domain of Sec23/24"/>
    <property type="match status" value="1"/>
</dbReference>
<feature type="chain" id="PRO_0000295491" description="Protein transport protein SEC24">
    <location>
        <begin position="1"/>
        <end position="959"/>
    </location>
</feature>
<feature type="region of interest" description="Disordered" evidence="2">
    <location>
        <begin position="1"/>
        <end position="135"/>
    </location>
</feature>
<feature type="region of interest" description="Disordered" evidence="2">
    <location>
        <begin position="163"/>
        <end position="184"/>
    </location>
</feature>
<feature type="region of interest" description="Zinc finger-like">
    <location>
        <begin position="283"/>
        <end position="308"/>
    </location>
</feature>
<feature type="compositionally biased region" description="Low complexity" evidence="2">
    <location>
        <begin position="1"/>
        <end position="35"/>
    </location>
</feature>
<feature type="compositionally biased region" description="Low complexity" evidence="2">
    <location>
        <begin position="165"/>
        <end position="183"/>
    </location>
</feature>
<feature type="binding site" evidence="1">
    <location>
        <position position="283"/>
    </location>
    <ligand>
        <name>Zn(2+)</name>
        <dbReference type="ChEBI" id="CHEBI:29105"/>
    </ligand>
</feature>
<feature type="binding site" evidence="1">
    <location>
        <position position="286"/>
    </location>
    <ligand>
        <name>Zn(2+)</name>
        <dbReference type="ChEBI" id="CHEBI:29105"/>
    </ligand>
</feature>
<feature type="binding site" evidence="1">
    <location>
        <position position="305"/>
    </location>
    <ligand>
        <name>Zn(2+)</name>
        <dbReference type="ChEBI" id="CHEBI:29105"/>
    </ligand>
</feature>
<feature type="binding site" evidence="1">
    <location>
        <position position="308"/>
    </location>
    <ligand>
        <name>Zn(2+)</name>
        <dbReference type="ChEBI" id="CHEBI:29105"/>
    </ligand>
</feature>
<protein>
    <recommendedName>
        <fullName>Protein transport protein SEC24</fullName>
    </recommendedName>
</protein>